<comment type="function">
    <text evidence="1">DNA-dependent RNA polymerase catalyzes the transcription of DNA into RNA using the four ribonucleoside triphosphates as substrates.</text>
</comment>
<comment type="catalytic activity">
    <reaction evidence="1">
        <text>RNA(n) + a ribonucleoside 5'-triphosphate = RNA(n+1) + diphosphate</text>
        <dbReference type="Rhea" id="RHEA:21248"/>
        <dbReference type="Rhea" id="RHEA-COMP:14527"/>
        <dbReference type="Rhea" id="RHEA-COMP:17342"/>
        <dbReference type="ChEBI" id="CHEBI:33019"/>
        <dbReference type="ChEBI" id="CHEBI:61557"/>
        <dbReference type="ChEBI" id="CHEBI:140395"/>
        <dbReference type="EC" id="2.7.7.6"/>
    </reaction>
</comment>
<comment type="cofactor">
    <cofactor evidence="1">
        <name>Mg(2+)</name>
        <dbReference type="ChEBI" id="CHEBI:18420"/>
    </cofactor>
    <text evidence="1">Binds 1 Mg(2+) ion per subunit.</text>
</comment>
<comment type="cofactor">
    <cofactor evidence="1">
        <name>Zn(2+)</name>
        <dbReference type="ChEBI" id="CHEBI:29105"/>
    </cofactor>
    <text evidence="1">Binds 1 Zn(2+) ion per subunit.</text>
</comment>
<comment type="subunit">
    <text evidence="1">In plastids the minimal PEP RNA polymerase catalytic core is composed of four subunits: alpha, beta, beta', and beta''. When a (nuclear-encoded) sigma factor is associated with the core the holoenzyme is formed, which can initiate transcription.</text>
</comment>
<comment type="subcellular location">
    <subcellularLocation>
        <location evidence="1">Plastid</location>
        <location evidence="1">Chloroplast</location>
    </subcellularLocation>
</comment>
<comment type="similarity">
    <text evidence="1">Belongs to the RNA polymerase beta' chain family. RpoC1 subfamily.</text>
</comment>
<comment type="sequence caution" evidence="2">
    <conflict type="erroneous initiation">
        <sequence resource="EMBL-CDS" id="CAA77411"/>
    </conflict>
    <text>Extended N-terminus.</text>
</comment>
<reference key="1">
    <citation type="journal article" date="1986" name="EMBO J.">
        <title>The complete nucleotide sequence of the tobacco chloroplast genome: its gene organization and expression.</title>
        <authorList>
            <person name="Shinozaki K."/>
            <person name="Ohme M."/>
            <person name="Tanaka M."/>
            <person name="Wakasugi T."/>
            <person name="Hayashida N."/>
            <person name="Matsubayashi T."/>
            <person name="Zaita N."/>
            <person name="Chunwongse J."/>
            <person name="Obokata J."/>
            <person name="Yamaguchi-Shinozaki K."/>
            <person name="Ohto C."/>
            <person name="Torazawa K."/>
            <person name="Meng B.-Y."/>
            <person name="Sugita M."/>
            <person name="Deno H."/>
            <person name="Kamogashira T."/>
            <person name="Yamada K."/>
            <person name="Kusuda J."/>
            <person name="Takaiwa F."/>
            <person name="Kato A."/>
            <person name="Tohdoh N."/>
            <person name="Shimada H."/>
            <person name="Sugiura M."/>
        </authorList>
    </citation>
    <scope>NUCLEOTIDE SEQUENCE [LARGE SCALE GENOMIC DNA]</scope>
    <source>
        <strain>cv. Bright Yellow 4</strain>
    </source>
</reference>
<gene>
    <name evidence="1" type="primary">rpoC1</name>
</gene>
<feature type="chain" id="PRO_0000067900" description="DNA-directed RNA polymerase subunit beta'">
    <location>
        <begin position="1"/>
        <end position="680"/>
    </location>
</feature>
<feature type="binding site" evidence="1">
    <location>
        <position position="68"/>
    </location>
    <ligand>
        <name>Zn(2+)</name>
        <dbReference type="ChEBI" id="CHEBI:29105"/>
    </ligand>
</feature>
<feature type="binding site" evidence="1">
    <location>
        <position position="70"/>
    </location>
    <ligand>
        <name>Zn(2+)</name>
        <dbReference type="ChEBI" id="CHEBI:29105"/>
    </ligand>
</feature>
<feature type="binding site" evidence="1">
    <location>
        <position position="86"/>
    </location>
    <ligand>
        <name>Zn(2+)</name>
        <dbReference type="ChEBI" id="CHEBI:29105"/>
    </ligand>
</feature>
<feature type="binding site" evidence="1">
    <location>
        <position position="89"/>
    </location>
    <ligand>
        <name>Zn(2+)</name>
        <dbReference type="ChEBI" id="CHEBI:29105"/>
    </ligand>
</feature>
<feature type="binding site" evidence="1">
    <location>
        <position position="488"/>
    </location>
    <ligand>
        <name>Mg(2+)</name>
        <dbReference type="ChEBI" id="CHEBI:18420"/>
    </ligand>
</feature>
<feature type="binding site" evidence="1">
    <location>
        <position position="490"/>
    </location>
    <ligand>
        <name>Mg(2+)</name>
        <dbReference type="ChEBI" id="CHEBI:18420"/>
    </ligand>
</feature>
<feature type="binding site" evidence="1">
    <location>
        <position position="492"/>
    </location>
    <ligand>
        <name>Mg(2+)</name>
        <dbReference type="ChEBI" id="CHEBI:18420"/>
    </ligand>
</feature>
<accession>P12116</accession>
<keyword id="KW-0150">Chloroplast</keyword>
<keyword id="KW-0240">DNA-directed RNA polymerase</keyword>
<keyword id="KW-0460">Magnesium</keyword>
<keyword id="KW-0479">Metal-binding</keyword>
<keyword id="KW-0548">Nucleotidyltransferase</keyword>
<keyword id="KW-0934">Plastid</keyword>
<keyword id="KW-1185">Reference proteome</keyword>
<keyword id="KW-0804">Transcription</keyword>
<keyword id="KW-0808">Transferase</keyword>
<keyword id="KW-0862">Zinc</keyword>
<name>RPOC1_TOBAC</name>
<proteinExistence type="inferred from homology"/>
<organism>
    <name type="scientific">Nicotiana tabacum</name>
    <name type="common">Common tobacco</name>
    <dbReference type="NCBI Taxonomy" id="4097"/>
    <lineage>
        <taxon>Eukaryota</taxon>
        <taxon>Viridiplantae</taxon>
        <taxon>Streptophyta</taxon>
        <taxon>Embryophyta</taxon>
        <taxon>Tracheophyta</taxon>
        <taxon>Spermatophyta</taxon>
        <taxon>Magnoliopsida</taxon>
        <taxon>eudicotyledons</taxon>
        <taxon>Gunneridae</taxon>
        <taxon>Pentapetalae</taxon>
        <taxon>asterids</taxon>
        <taxon>lamiids</taxon>
        <taxon>Solanales</taxon>
        <taxon>Solanaceae</taxon>
        <taxon>Nicotianoideae</taxon>
        <taxon>Nicotianeae</taxon>
        <taxon>Nicotiana</taxon>
    </lineage>
</organism>
<geneLocation type="chloroplast"/>
<protein>
    <recommendedName>
        <fullName evidence="1">DNA-directed RNA polymerase subunit beta'</fullName>
        <ecNumber evidence="1">2.7.7.6</ecNumber>
    </recommendedName>
    <alternativeName>
        <fullName evidence="1">PEP</fullName>
    </alternativeName>
    <alternativeName>
        <fullName evidence="1">Plastid-encoded RNA polymerase subunit beta'</fullName>
        <shortName evidence="1">RNA polymerase subunit beta'</shortName>
    </alternativeName>
</protein>
<evidence type="ECO:0000255" key="1">
    <source>
        <dbReference type="HAMAP-Rule" id="MF_01323"/>
    </source>
</evidence>
<evidence type="ECO:0000305" key="2"/>
<dbReference type="EC" id="2.7.7.6" evidence="1"/>
<dbReference type="EMBL" id="Z00044">
    <property type="protein sequence ID" value="CAA77411.1"/>
    <property type="status" value="ALT_INIT"/>
    <property type="molecule type" value="Genomic_DNA"/>
</dbReference>
<dbReference type="PIR" id="A05032">
    <property type="entry name" value="A05032"/>
</dbReference>
<dbReference type="PIR" id="A05033">
    <property type="entry name" value="A05033"/>
</dbReference>
<dbReference type="RefSeq" id="NP_054487.1">
    <property type="nucleotide sequence ID" value="NC_001879.2"/>
</dbReference>
<dbReference type="SMR" id="P12116"/>
<dbReference type="GeneID" id="800521"/>
<dbReference type="KEGG" id="nta:800521"/>
<dbReference type="OrthoDB" id="1862828at2759"/>
<dbReference type="Proteomes" id="UP000084051">
    <property type="component" value="Unplaced"/>
</dbReference>
<dbReference type="GO" id="GO:0009507">
    <property type="term" value="C:chloroplast"/>
    <property type="evidence" value="ECO:0007669"/>
    <property type="project" value="UniProtKB-SubCell"/>
</dbReference>
<dbReference type="GO" id="GO:0000428">
    <property type="term" value="C:DNA-directed RNA polymerase complex"/>
    <property type="evidence" value="ECO:0007669"/>
    <property type="project" value="UniProtKB-KW"/>
</dbReference>
<dbReference type="GO" id="GO:0005739">
    <property type="term" value="C:mitochondrion"/>
    <property type="evidence" value="ECO:0007669"/>
    <property type="project" value="GOC"/>
</dbReference>
<dbReference type="GO" id="GO:0003677">
    <property type="term" value="F:DNA binding"/>
    <property type="evidence" value="ECO:0007669"/>
    <property type="project" value="UniProtKB-UniRule"/>
</dbReference>
<dbReference type="GO" id="GO:0003899">
    <property type="term" value="F:DNA-directed RNA polymerase activity"/>
    <property type="evidence" value="ECO:0007669"/>
    <property type="project" value="UniProtKB-UniRule"/>
</dbReference>
<dbReference type="GO" id="GO:0000287">
    <property type="term" value="F:magnesium ion binding"/>
    <property type="evidence" value="ECO:0007669"/>
    <property type="project" value="UniProtKB-UniRule"/>
</dbReference>
<dbReference type="GO" id="GO:0008270">
    <property type="term" value="F:zinc ion binding"/>
    <property type="evidence" value="ECO:0007669"/>
    <property type="project" value="UniProtKB-UniRule"/>
</dbReference>
<dbReference type="GO" id="GO:0006351">
    <property type="term" value="P:DNA-templated transcription"/>
    <property type="evidence" value="ECO:0007669"/>
    <property type="project" value="UniProtKB-UniRule"/>
</dbReference>
<dbReference type="FunFam" id="1.10.40.90:FF:000002">
    <property type="entry name" value="DNA-directed RNA polymerase subunit"/>
    <property type="match status" value="1"/>
</dbReference>
<dbReference type="Gene3D" id="1.10.40.90">
    <property type="match status" value="1"/>
</dbReference>
<dbReference type="Gene3D" id="2.40.40.20">
    <property type="match status" value="1"/>
</dbReference>
<dbReference type="Gene3D" id="4.10.860.120">
    <property type="entry name" value="RNA polymerase II, clamp domain"/>
    <property type="match status" value="1"/>
</dbReference>
<dbReference type="Gene3D" id="1.10.274.100">
    <property type="entry name" value="RNA polymerase Rpb1, domain 3"/>
    <property type="match status" value="1"/>
</dbReference>
<dbReference type="HAMAP" id="MF_01323">
    <property type="entry name" value="RNApol_bact_RpoC1"/>
    <property type="match status" value="1"/>
</dbReference>
<dbReference type="InterPro" id="IPR045867">
    <property type="entry name" value="DNA-dir_RpoC_beta_prime"/>
</dbReference>
<dbReference type="InterPro" id="IPR000722">
    <property type="entry name" value="RNA_pol_asu"/>
</dbReference>
<dbReference type="InterPro" id="IPR006592">
    <property type="entry name" value="RNA_pol_N"/>
</dbReference>
<dbReference type="InterPro" id="IPR007080">
    <property type="entry name" value="RNA_pol_Rpb1_1"/>
</dbReference>
<dbReference type="InterPro" id="IPR042102">
    <property type="entry name" value="RNA_pol_Rpb1_3_sf"/>
</dbReference>
<dbReference type="InterPro" id="IPR044893">
    <property type="entry name" value="RNA_pol_Rpb1_clamp_domain"/>
</dbReference>
<dbReference type="InterPro" id="IPR034678">
    <property type="entry name" value="RNApol_RpoC1"/>
</dbReference>
<dbReference type="PANTHER" id="PTHR19376">
    <property type="entry name" value="DNA-DIRECTED RNA POLYMERASE"/>
    <property type="match status" value="1"/>
</dbReference>
<dbReference type="PANTHER" id="PTHR19376:SF54">
    <property type="entry name" value="DNA-DIRECTED RNA POLYMERASE SUBUNIT BETA"/>
    <property type="match status" value="1"/>
</dbReference>
<dbReference type="Pfam" id="PF04997">
    <property type="entry name" value="RNA_pol_Rpb1_1"/>
    <property type="match status" value="1"/>
</dbReference>
<dbReference type="Pfam" id="PF00623">
    <property type="entry name" value="RNA_pol_Rpb1_2"/>
    <property type="match status" value="2"/>
</dbReference>
<dbReference type="SMART" id="SM00663">
    <property type="entry name" value="RPOLA_N"/>
    <property type="match status" value="1"/>
</dbReference>
<dbReference type="SUPFAM" id="SSF64484">
    <property type="entry name" value="beta and beta-prime subunits of DNA dependent RNA-polymerase"/>
    <property type="match status" value="1"/>
</dbReference>
<sequence length="680" mass="78428">MIDRYKHQQLRIGSVSPQQISAWATKILPNGEIVGEVTKPYTFHYKTNKPEKMDYFVKNFGPIKSGICACGNYRVIGDEKEDPKFCEQCGVEFVDSRIRRYQMGYIKLACPVTHVWYLKRLPSYIANLLDKPLKELEGLVYCDFSFARPITKKPTFLRLRGLFEYEIQSWKYSIPLFFTTQGFDTFRNREISTGAGAIREQLADLDLRIIIENSLVEWEELGEEGHTGNEWEDRKVGRRKDFLVRRVELAKHFIRTNIEPEWMVLCLLPVLPPELRPIIQIDGGKLMSSDINELYRRVIYRNNTLTDLLTTSRSTPGELVMCQEKLVQEAVDTLLDNGIRGQPMRDGHNKVYKSFSDVIEGKEGRFRETLLGKRVDYSGRSVIVVGPSLSLHRCGLPREIAIELFQTFVIRGLIRQHLASNIGVAKSKIREKEPIVWEILQEVMQGHPVLLNRAPTLHRLGIQAFQPVLVEGRAICLHPLVCKGFNADFDGDQMAVHVPLSLEAQVEARLLMFSHMNLLSPAIGDPISVPTQDMLIGLYVLTSGNHRGICVNRYNPCNRRNYQNQKRSDNSHYKYTKEPFFSNSYDAIGAYRQKRINLDSPLWLRWRLDQRVIASRETPIEVHYESLGTFYEIYGHYLIVRSLKKQILFIYIRTTVGHIALYREIEEAIQGFSRAYSSGT</sequence>